<accession>Q7NI66</accession>
<dbReference type="EC" id="1.3.1.98" evidence="1"/>
<dbReference type="EMBL" id="BA000045">
    <property type="protein sequence ID" value="BAC90258.1"/>
    <property type="molecule type" value="Genomic_DNA"/>
</dbReference>
<dbReference type="RefSeq" id="NP_925263.1">
    <property type="nucleotide sequence ID" value="NC_005125.1"/>
</dbReference>
<dbReference type="RefSeq" id="WP_011142314.1">
    <property type="nucleotide sequence ID" value="NC_005125.1"/>
</dbReference>
<dbReference type="SMR" id="Q7NI66"/>
<dbReference type="FunCoup" id="Q7NI66">
    <property type="interactions" value="86"/>
</dbReference>
<dbReference type="STRING" id="251221.gene:10759812"/>
<dbReference type="EnsemblBacteria" id="BAC90258">
    <property type="protein sequence ID" value="BAC90258"/>
    <property type="gene ID" value="BAC90258"/>
</dbReference>
<dbReference type="KEGG" id="gvi:glr2317"/>
<dbReference type="PATRIC" id="fig|251221.4.peg.2354"/>
<dbReference type="eggNOG" id="COG0812">
    <property type="taxonomic scope" value="Bacteria"/>
</dbReference>
<dbReference type="HOGENOM" id="CLU_035304_1_1_3"/>
<dbReference type="InParanoid" id="Q7NI66"/>
<dbReference type="OrthoDB" id="9804753at2"/>
<dbReference type="PhylomeDB" id="Q7NI66"/>
<dbReference type="UniPathway" id="UPA00219"/>
<dbReference type="Proteomes" id="UP000000557">
    <property type="component" value="Chromosome"/>
</dbReference>
<dbReference type="GO" id="GO:0005829">
    <property type="term" value="C:cytosol"/>
    <property type="evidence" value="ECO:0000318"/>
    <property type="project" value="GO_Central"/>
</dbReference>
<dbReference type="GO" id="GO:0071949">
    <property type="term" value="F:FAD binding"/>
    <property type="evidence" value="ECO:0007669"/>
    <property type="project" value="InterPro"/>
</dbReference>
<dbReference type="GO" id="GO:0050660">
    <property type="term" value="F:flavin adenine dinucleotide binding"/>
    <property type="evidence" value="ECO:0000318"/>
    <property type="project" value="GO_Central"/>
</dbReference>
<dbReference type="GO" id="GO:0008762">
    <property type="term" value="F:UDP-N-acetylmuramate dehydrogenase activity"/>
    <property type="evidence" value="ECO:0000318"/>
    <property type="project" value="GO_Central"/>
</dbReference>
<dbReference type="GO" id="GO:0051301">
    <property type="term" value="P:cell division"/>
    <property type="evidence" value="ECO:0007669"/>
    <property type="project" value="UniProtKB-KW"/>
</dbReference>
<dbReference type="GO" id="GO:0071555">
    <property type="term" value="P:cell wall organization"/>
    <property type="evidence" value="ECO:0000318"/>
    <property type="project" value="GO_Central"/>
</dbReference>
<dbReference type="GO" id="GO:0009252">
    <property type="term" value="P:peptidoglycan biosynthetic process"/>
    <property type="evidence" value="ECO:0007669"/>
    <property type="project" value="UniProtKB-UniRule"/>
</dbReference>
<dbReference type="GO" id="GO:0008360">
    <property type="term" value="P:regulation of cell shape"/>
    <property type="evidence" value="ECO:0007669"/>
    <property type="project" value="UniProtKB-KW"/>
</dbReference>
<dbReference type="Gene3D" id="3.30.465.10">
    <property type="match status" value="1"/>
</dbReference>
<dbReference type="Gene3D" id="3.90.78.10">
    <property type="entry name" value="UDP-N-acetylenolpyruvoylglucosamine reductase, C-terminal domain"/>
    <property type="match status" value="1"/>
</dbReference>
<dbReference type="Gene3D" id="3.30.43.10">
    <property type="entry name" value="Uridine Diphospho-n-acetylenolpyruvylglucosamine Reductase, domain 2"/>
    <property type="match status" value="1"/>
</dbReference>
<dbReference type="HAMAP" id="MF_00037">
    <property type="entry name" value="MurB"/>
    <property type="match status" value="1"/>
</dbReference>
<dbReference type="InterPro" id="IPR016166">
    <property type="entry name" value="FAD-bd_PCMH"/>
</dbReference>
<dbReference type="InterPro" id="IPR036318">
    <property type="entry name" value="FAD-bd_PCMH-like_sf"/>
</dbReference>
<dbReference type="InterPro" id="IPR016167">
    <property type="entry name" value="FAD-bd_PCMH_sub1"/>
</dbReference>
<dbReference type="InterPro" id="IPR016169">
    <property type="entry name" value="FAD-bd_PCMH_sub2"/>
</dbReference>
<dbReference type="InterPro" id="IPR003170">
    <property type="entry name" value="MurB"/>
</dbReference>
<dbReference type="InterPro" id="IPR011601">
    <property type="entry name" value="MurB_C"/>
</dbReference>
<dbReference type="InterPro" id="IPR036635">
    <property type="entry name" value="MurB_C_sf"/>
</dbReference>
<dbReference type="InterPro" id="IPR006094">
    <property type="entry name" value="Oxid_FAD_bind_N"/>
</dbReference>
<dbReference type="NCBIfam" id="TIGR00179">
    <property type="entry name" value="murB"/>
    <property type="match status" value="1"/>
</dbReference>
<dbReference type="NCBIfam" id="NF010480">
    <property type="entry name" value="PRK13905.1"/>
    <property type="match status" value="1"/>
</dbReference>
<dbReference type="PANTHER" id="PTHR21071">
    <property type="entry name" value="UDP-N-ACETYLENOLPYRUVOYLGLUCOSAMINE REDUCTASE"/>
    <property type="match status" value="1"/>
</dbReference>
<dbReference type="PANTHER" id="PTHR21071:SF4">
    <property type="entry name" value="UDP-N-ACETYLENOLPYRUVOYLGLUCOSAMINE REDUCTASE"/>
    <property type="match status" value="1"/>
</dbReference>
<dbReference type="Pfam" id="PF01565">
    <property type="entry name" value="FAD_binding_4"/>
    <property type="match status" value="1"/>
</dbReference>
<dbReference type="Pfam" id="PF02873">
    <property type="entry name" value="MurB_C"/>
    <property type="match status" value="1"/>
</dbReference>
<dbReference type="SUPFAM" id="SSF56176">
    <property type="entry name" value="FAD-binding/transporter-associated domain-like"/>
    <property type="match status" value="1"/>
</dbReference>
<dbReference type="SUPFAM" id="SSF56194">
    <property type="entry name" value="Uridine diphospho-N-Acetylenolpyruvylglucosamine reductase, MurB, C-terminal domain"/>
    <property type="match status" value="1"/>
</dbReference>
<dbReference type="PROSITE" id="PS51387">
    <property type="entry name" value="FAD_PCMH"/>
    <property type="match status" value="1"/>
</dbReference>
<keyword id="KW-0131">Cell cycle</keyword>
<keyword id="KW-0132">Cell division</keyword>
<keyword id="KW-0133">Cell shape</keyword>
<keyword id="KW-0961">Cell wall biogenesis/degradation</keyword>
<keyword id="KW-0963">Cytoplasm</keyword>
<keyword id="KW-0274">FAD</keyword>
<keyword id="KW-0285">Flavoprotein</keyword>
<keyword id="KW-0521">NADP</keyword>
<keyword id="KW-0560">Oxidoreductase</keyword>
<keyword id="KW-0573">Peptidoglycan synthesis</keyword>
<keyword id="KW-1185">Reference proteome</keyword>
<feature type="chain" id="PRO_0000179213" description="UDP-N-acetylenolpyruvoylglucosamine reductase">
    <location>
        <begin position="1"/>
        <end position="297"/>
    </location>
</feature>
<feature type="domain" description="FAD-binding PCMH-type" evidence="1">
    <location>
        <begin position="18"/>
        <end position="184"/>
    </location>
</feature>
<feature type="active site" evidence="1">
    <location>
        <position position="163"/>
    </location>
</feature>
<feature type="active site" description="Proton donor" evidence="1">
    <location>
        <position position="214"/>
    </location>
</feature>
<feature type="active site" evidence="1">
    <location>
        <position position="285"/>
    </location>
</feature>
<evidence type="ECO:0000255" key="1">
    <source>
        <dbReference type="HAMAP-Rule" id="MF_00037"/>
    </source>
</evidence>
<organism>
    <name type="scientific">Gloeobacter violaceus (strain ATCC 29082 / PCC 7421)</name>
    <dbReference type="NCBI Taxonomy" id="251221"/>
    <lineage>
        <taxon>Bacteria</taxon>
        <taxon>Bacillati</taxon>
        <taxon>Cyanobacteriota</taxon>
        <taxon>Cyanophyceae</taxon>
        <taxon>Gloeobacterales</taxon>
        <taxon>Gloeobacteraceae</taxon>
        <taxon>Gloeobacter</taxon>
    </lineage>
</organism>
<comment type="function">
    <text evidence="1">Cell wall formation.</text>
</comment>
<comment type="catalytic activity">
    <reaction evidence="1">
        <text>UDP-N-acetyl-alpha-D-muramate + NADP(+) = UDP-N-acetyl-3-O-(1-carboxyvinyl)-alpha-D-glucosamine + NADPH + H(+)</text>
        <dbReference type="Rhea" id="RHEA:12248"/>
        <dbReference type="ChEBI" id="CHEBI:15378"/>
        <dbReference type="ChEBI" id="CHEBI:57783"/>
        <dbReference type="ChEBI" id="CHEBI:58349"/>
        <dbReference type="ChEBI" id="CHEBI:68483"/>
        <dbReference type="ChEBI" id="CHEBI:70757"/>
        <dbReference type="EC" id="1.3.1.98"/>
    </reaction>
</comment>
<comment type="cofactor">
    <cofactor evidence="1">
        <name>FAD</name>
        <dbReference type="ChEBI" id="CHEBI:57692"/>
    </cofactor>
</comment>
<comment type="pathway">
    <text evidence="1">Cell wall biogenesis; peptidoglycan biosynthesis.</text>
</comment>
<comment type="subcellular location">
    <subcellularLocation>
        <location evidence="1">Cytoplasm</location>
    </subcellularLocation>
</comment>
<protein>
    <recommendedName>
        <fullName evidence="1">UDP-N-acetylenolpyruvoylglucosamine reductase</fullName>
        <ecNumber evidence="1">1.3.1.98</ecNumber>
    </recommendedName>
    <alternativeName>
        <fullName evidence="1">UDP-N-acetylmuramate dehydrogenase</fullName>
    </alternativeName>
</protein>
<reference key="1">
    <citation type="journal article" date="2003" name="DNA Res.">
        <title>Complete genome structure of Gloeobacter violaceus PCC 7421, a cyanobacterium that lacks thylakoids.</title>
        <authorList>
            <person name="Nakamura Y."/>
            <person name="Kaneko T."/>
            <person name="Sato S."/>
            <person name="Mimuro M."/>
            <person name="Miyashita H."/>
            <person name="Tsuchiya T."/>
            <person name="Sasamoto S."/>
            <person name="Watanabe A."/>
            <person name="Kawashima K."/>
            <person name="Kishida Y."/>
            <person name="Kiyokawa C."/>
            <person name="Kohara M."/>
            <person name="Matsumoto M."/>
            <person name="Matsuno A."/>
            <person name="Nakazaki N."/>
            <person name="Shimpo S."/>
            <person name="Takeuchi C."/>
            <person name="Yamada M."/>
            <person name="Tabata S."/>
        </authorList>
    </citation>
    <scope>NUCLEOTIDE SEQUENCE [LARGE SCALE GENOMIC DNA]</scope>
    <source>
        <strain>ATCC 29082 / PCC 7421</strain>
    </source>
</reference>
<sequence>MKDQLQPGVSLALLTAYQVGGPAEWYLQPTKAEVLDEALGWARRSELPVTVIGAGTNLLISDVGIGGLVVHLRSWRGTQILEEGLIEVKAGESIAALAFQTARRGWAGLEWAVGVPGSIGGAVVMNAGAHGAQFSDTLESVEVLTETGERRRVAAGELGLTYRSSLLQQRDWVVLSARLRLAPGHQPARLIEHIDEFNTFRHRTQPSGFPNCGSVFRNPGGEKKAGWMLDRSGLKGQSVGAAQVAEQHANFILNRGGATARDILTLMTRMRDRVVADWGIALKPEVRFLGRGLNWAG</sequence>
<gene>
    <name evidence="1" type="primary">murB</name>
    <name type="ordered locus">glr2317</name>
</gene>
<proteinExistence type="inferred from homology"/>
<name>MURB_GLOVI</name>